<organism>
    <name type="scientific">Methylobacterium nodulans (strain LMG 21967 / CNCM I-2342 / ORS 2060)</name>
    <dbReference type="NCBI Taxonomy" id="460265"/>
    <lineage>
        <taxon>Bacteria</taxon>
        <taxon>Pseudomonadati</taxon>
        <taxon>Pseudomonadota</taxon>
        <taxon>Alphaproteobacteria</taxon>
        <taxon>Hyphomicrobiales</taxon>
        <taxon>Methylobacteriaceae</taxon>
        <taxon>Methylobacterium</taxon>
    </lineage>
</organism>
<sequence length="1374" mass="152881">MANTLVGRKRIRKFFGKIREVAEMPNLIEVQKASYDQFLMVDEPEGGRPDEGLQSVFKSVFPISDFSSTALLEFVKYTFEAPKYDVDECRQRGITFAAPLKVTLRLIVFDVDPDTGAKSVKDIKEQDVYMGDMPLMTENGTFIVNGTERVIVSQMHRSPGVFFDHDKGKTHSSGKLLFAARIIPYRGSWLDVEFDAKDIVYARIDRKRKIPVTSLLFALGLDGEEILSTFYNRISYTRDGADWRVPYDAERLKGFKASTDLIDADSGEVVLEAGKKLTARSARQIAEKGVTALRATDEDLIGQYIAEDMVNYKTGEIYAEAGDEISEKLLKGLADVGIEEIPVLDIDHVNVGPYIRNTLAVDKNSNREGALFDIYRVMRPGEPPTLDTAEAMFHSLFFDAERYDLSAVGRVKMNMRLDLDAPDTMRTLRRDDMLAVVKALVDLRDGKGEIDDIDHLGNRRVRSVGELMENQYRLGLLRMERAIKERMSSVDIDTVMPQDLINAKPAAAAVREFFGSSQLSQFMDQTNPLSEVTHKRRLSALGPGGLTRERAGFEVRDVHPTHYGRICPIETPEGPNIGLINSLATFARVNKYGFIETPFRRVKNGVVTDEVVYLSAMEEARYYVAQASAAMDENRRLTEDLVVCRRAGEVIVVAPDRVDLMDVSPKQLVSVAAALIPFLENDDANRALMGSNMQRQAVPLVRADAPFVGTGMESVVARDSGAAIAARRSGIVDQVDATRIVIRATEETDPTKPGVDIYRLQKFQRSNQSTCITQKPLVRVGEQVGKGDIIADGPSTEFGELALGRNVLVAFMPWNGYNFEDSILLSERIVKDDVFTSIHIEEFEVMARDTKLGPEEITRDIPNVSEEALKNLDEAGIVYIGAEVHAGDILVGKITPKGESPMTPEEKLLRAIFGEKASDVRDTSLRVPPGVTGTIVEVRVFNRHGVDKDERAQAIEREEIERLAKDRDDEQAILDRNTYARLADVLVGQAPVAGPKGFKKDTVLTREGLADYPRSQWWQFAVVDDRLMTEIEAMQKQYDESKKRLEQRFLDKVEKLQRGDELPPGVMKMVKVFVAVKRKIQPGDKMAGRHGNKGVVSRIVPIEDMPFLEDGTHADIVLNPLGVPSRMNVGQILETHLGWAAAGLGRQVAQAVDAYLRSHDATPLREQMRRIYSEAELDGLSDQDLAEIGNNLRRGVPMATPVFNGAKEADIEAMLEMAGLDRSGQSTLYDGRTGEPFDRKVTVGYIYMLKLHHLVDDKIHARSIGPYSLVTQQPLGGKAQFGGQRFGEMEVWALEAYGAAYTLQEMLTVKSDDVAGRTKVYEAIVRGDDTFEAGIPESFNVLVKEMRSLGLNVELISSKRAANDQLEAPPEAAE</sequence>
<gene>
    <name evidence="1" type="primary">rpoB</name>
    <name type="ordered locus">Mnod_1901</name>
</gene>
<name>RPOB_METNO</name>
<accession>B8IS78</accession>
<keyword id="KW-0240">DNA-directed RNA polymerase</keyword>
<keyword id="KW-0548">Nucleotidyltransferase</keyword>
<keyword id="KW-1185">Reference proteome</keyword>
<keyword id="KW-0804">Transcription</keyword>
<keyword id="KW-0808">Transferase</keyword>
<proteinExistence type="inferred from homology"/>
<evidence type="ECO:0000255" key="1">
    <source>
        <dbReference type="HAMAP-Rule" id="MF_01321"/>
    </source>
</evidence>
<dbReference type="EC" id="2.7.7.6" evidence="1"/>
<dbReference type="EMBL" id="CP001349">
    <property type="protein sequence ID" value="ACL56890.1"/>
    <property type="molecule type" value="Genomic_DNA"/>
</dbReference>
<dbReference type="RefSeq" id="WP_015928581.1">
    <property type="nucleotide sequence ID" value="NC_011894.1"/>
</dbReference>
<dbReference type="SMR" id="B8IS78"/>
<dbReference type="STRING" id="460265.Mnod_1901"/>
<dbReference type="KEGG" id="mno:Mnod_1901"/>
<dbReference type="eggNOG" id="COG0085">
    <property type="taxonomic scope" value="Bacteria"/>
</dbReference>
<dbReference type="HOGENOM" id="CLU_000524_4_0_5"/>
<dbReference type="OrthoDB" id="9803954at2"/>
<dbReference type="Proteomes" id="UP000008207">
    <property type="component" value="Chromosome"/>
</dbReference>
<dbReference type="GO" id="GO:0000428">
    <property type="term" value="C:DNA-directed RNA polymerase complex"/>
    <property type="evidence" value="ECO:0007669"/>
    <property type="project" value="UniProtKB-KW"/>
</dbReference>
<dbReference type="GO" id="GO:0003677">
    <property type="term" value="F:DNA binding"/>
    <property type="evidence" value="ECO:0007669"/>
    <property type="project" value="UniProtKB-UniRule"/>
</dbReference>
<dbReference type="GO" id="GO:0003899">
    <property type="term" value="F:DNA-directed RNA polymerase activity"/>
    <property type="evidence" value="ECO:0007669"/>
    <property type="project" value="UniProtKB-UniRule"/>
</dbReference>
<dbReference type="GO" id="GO:0032549">
    <property type="term" value="F:ribonucleoside binding"/>
    <property type="evidence" value="ECO:0007669"/>
    <property type="project" value="InterPro"/>
</dbReference>
<dbReference type="GO" id="GO:0006351">
    <property type="term" value="P:DNA-templated transcription"/>
    <property type="evidence" value="ECO:0007669"/>
    <property type="project" value="UniProtKB-UniRule"/>
</dbReference>
<dbReference type="CDD" id="cd00653">
    <property type="entry name" value="RNA_pol_B_RPB2"/>
    <property type="match status" value="1"/>
</dbReference>
<dbReference type="FunFam" id="3.90.1800.10:FF:000001">
    <property type="entry name" value="DNA-directed RNA polymerase subunit beta"/>
    <property type="match status" value="1"/>
</dbReference>
<dbReference type="Gene3D" id="2.40.50.100">
    <property type="match status" value="1"/>
</dbReference>
<dbReference type="Gene3D" id="2.40.50.150">
    <property type="match status" value="1"/>
</dbReference>
<dbReference type="Gene3D" id="3.90.1100.10">
    <property type="match status" value="3"/>
</dbReference>
<dbReference type="Gene3D" id="2.40.270.10">
    <property type="entry name" value="DNA-directed RNA polymerase, subunit 2, domain 6"/>
    <property type="match status" value="1"/>
</dbReference>
<dbReference type="Gene3D" id="3.90.1800.10">
    <property type="entry name" value="RNA polymerase alpha subunit dimerisation domain"/>
    <property type="match status" value="1"/>
</dbReference>
<dbReference type="Gene3D" id="3.90.1110.10">
    <property type="entry name" value="RNA polymerase Rpb2, domain 2"/>
    <property type="match status" value="1"/>
</dbReference>
<dbReference type="HAMAP" id="MF_01321">
    <property type="entry name" value="RNApol_bact_RpoB"/>
    <property type="match status" value="1"/>
</dbReference>
<dbReference type="InterPro" id="IPR019462">
    <property type="entry name" value="DNA-dir_RNA_pol_bsu_external_1"/>
</dbReference>
<dbReference type="InterPro" id="IPR015712">
    <property type="entry name" value="DNA-dir_RNA_pol_su2"/>
</dbReference>
<dbReference type="InterPro" id="IPR007120">
    <property type="entry name" value="DNA-dir_RNAP_su2_dom"/>
</dbReference>
<dbReference type="InterPro" id="IPR037033">
    <property type="entry name" value="DNA-dir_RNAP_su2_hyb_sf"/>
</dbReference>
<dbReference type="InterPro" id="IPR010243">
    <property type="entry name" value="RNA_pol_bsu_bac"/>
</dbReference>
<dbReference type="InterPro" id="IPR007121">
    <property type="entry name" value="RNA_pol_bsu_CS"/>
</dbReference>
<dbReference type="InterPro" id="IPR007644">
    <property type="entry name" value="RNA_pol_bsu_protrusion"/>
</dbReference>
<dbReference type="InterPro" id="IPR007642">
    <property type="entry name" value="RNA_pol_Rpb2_2"/>
</dbReference>
<dbReference type="InterPro" id="IPR037034">
    <property type="entry name" value="RNA_pol_Rpb2_2_sf"/>
</dbReference>
<dbReference type="InterPro" id="IPR007645">
    <property type="entry name" value="RNA_pol_Rpb2_3"/>
</dbReference>
<dbReference type="InterPro" id="IPR007641">
    <property type="entry name" value="RNA_pol_Rpb2_7"/>
</dbReference>
<dbReference type="InterPro" id="IPR014724">
    <property type="entry name" value="RNA_pol_RPB2_OB-fold"/>
</dbReference>
<dbReference type="NCBIfam" id="NF001616">
    <property type="entry name" value="PRK00405.1"/>
    <property type="match status" value="1"/>
</dbReference>
<dbReference type="NCBIfam" id="TIGR02013">
    <property type="entry name" value="rpoB"/>
    <property type="match status" value="1"/>
</dbReference>
<dbReference type="PANTHER" id="PTHR20856">
    <property type="entry name" value="DNA-DIRECTED RNA POLYMERASE I SUBUNIT 2"/>
    <property type="match status" value="1"/>
</dbReference>
<dbReference type="Pfam" id="PF04563">
    <property type="entry name" value="RNA_pol_Rpb2_1"/>
    <property type="match status" value="1"/>
</dbReference>
<dbReference type="Pfam" id="PF04561">
    <property type="entry name" value="RNA_pol_Rpb2_2"/>
    <property type="match status" value="2"/>
</dbReference>
<dbReference type="Pfam" id="PF04565">
    <property type="entry name" value="RNA_pol_Rpb2_3"/>
    <property type="match status" value="1"/>
</dbReference>
<dbReference type="Pfam" id="PF10385">
    <property type="entry name" value="RNA_pol_Rpb2_45"/>
    <property type="match status" value="1"/>
</dbReference>
<dbReference type="Pfam" id="PF00562">
    <property type="entry name" value="RNA_pol_Rpb2_6"/>
    <property type="match status" value="1"/>
</dbReference>
<dbReference type="Pfam" id="PF04560">
    <property type="entry name" value="RNA_pol_Rpb2_7"/>
    <property type="match status" value="1"/>
</dbReference>
<dbReference type="SUPFAM" id="SSF64484">
    <property type="entry name" value="beta and beta-prime subunits of DNA dependent RNA-polymerase"/>
    <property type="match status" value="1"/>
</dbReference>
<dbReference type="PROSITE" id="PS01166">
    <property type="entry name" value="RNA_POL_BETA"/>
    <property type="match status" value="1"/>
</dbReference>
<reference key="1">
    <citation type="submission" date="2009-01" db="EMBL/GenBank/DDBJ databases">
        <title>Complete sequence of chromosome of Methylobacterium nodulans ORS 2060.</title>
        <authorList>
            <consortium name="US DOE Joint Genome Institute"/>
            <person name="Lucas S."/>
            <person name="Copeland A."/>
            <person name="Lapidus A."/>
            <person name="Glavina del Rio T."/>
            <person name="Dalin E."/>
            <person name="Tice H."/>
            <person name="Bruce D."/>
            <person name="Goodwin L."/>
            <person name="Pitluck S."/>
            <person name="Sims D."/>
            <person name="Brettin T."/>
            <person name="Detter J.C."/>
            <person name="Han C."/>
            <person name="Larimer F."/>
            <person name="Land M."/>
            <person name="Hauser L."/>
            <person name="Kyrpides N."/>
            <person name="Ivanova N."/>
            <person name="Marx C.J."/>
            <person name="Richardson P."/>
        </authorList>
    </citation>
    <scope>NUCLEOTIDE SEQUENCE [LARGE SCALE GENOMIC DNA]</scope>
    <source>
        <strain>LMG 21967 / CNCM I-2342 / ORS 2060</strain>
    </source>
</reference>
<comment type="function">
    <text evidence="1">DNA-dependent RNA polymerase catalyzes the transcription of DNA into RNA using the four ribonucleoside triphosphates as substrates.</text>
</comment>
<comment type="catalytic activity">
    <reaction evidence="1">
        <text>RNA(n) + a ribonucleoside 5'-triphosphate = RNA(n+1) + diphosphate</text>
        <dbReference type="Rhea" id="RHEA:21248"/>
        <dbReference type="Rhea" id="RHEA-COMP:14527"/>
        <dbReference type="Rhea" id="RHEA-COMP:17342"/>
        <dbReference type="ChEBI" id="CHEBI:33019"/>
        <dbReference type="ChEBI" id="CHEBI:61557"/>
        <dbReference type="ChEBI" id="CHEBI:140395"/>
        <dbReference type="EC" id="2.7.7.6"/>
    </reaction>
</comment>
<comment type="subunit">
    <text evidence="1">The RNAP catalytic core consists of 2 alpha, 1 beta, 1 beta' and 1 omega subunit. When a sigma factor is associated with the core the holoenzyme is formed, which can initiate transcription.</text>
</comment>
<comment type="similarity">
    <text evidence="1">Belongs to the RNA polymerase beta chain family.</text>
</comment>
<feature type="chain" id="PRO_1000165813" description="DNA-directed RNA polymerase subunit beta">
    <location>
        <begin position="1"/>
        <end position="1374"/>
    </location>
</feature>
<protein>
    <recommendedName>
        <fullName evidence="1">DNA-directed RNA polymerase subunit beta</fullName>
        <shortName evidence="1">RNAP subunit beta</shortName>
        <ecNumber evidence="1">2.7.7.6</ecNumber>
    </recommendedName>
    <alternativeName>
        <fullName evidence="1">RNA polymerase subunit beta</fullName>
    </alternativeName>
    <alternativeName>
        <fullName evidence="1">Transcriptase subunit beta</fullName>
    </alternativeName>
</protein>